<dbReference type="EC" id="4.2.1.59" evidence="1"/>
<dbReference type="EC" id="5.3.3.14" evidence="1"/>
<dbReference type="EMBL" id="AM933172">
    <property type="protein sequence ID" value="CAR32515.1"/>
    <property type="molecule type" value="Genomic_DNA"/>
</dbReference>
<dbReference type="RefSeq" id="WP_000227928.1">
    <property type="nucleotide sequence ID" value="NC_011294.1"/>
</dbReference>
<dbReference type="SMR" id="B5QZF7"/>
<dbReference type="KEGG" id="set:SEN0932"/>
<dbReference type="HOGENOM" id="CLU_097925_0_0_6"/>
<dbReference type="UniPathway" id="UPA00094"/>
<dbReference type="Proteomes" id="UP000000613">
    <property type="component" value="Chromosome"/>
</dbReference>
<dbReference type="GO" id="GO:0005737">
    <property type="term" value="C:cytoplasm"/>
    <property type="evidence" value="ECO:0007669"/>
    <property type="project" value="UniProtKB-SubCell"/>
</dbReference>
<dbReference type="GO" id="GO:0019171">
    <property type="term" value="F:(3R)-hydroxyacyl-[acyl-carrier-protein] dehydratase activity"/>
    <property type="evidence" value="ECO:0007669"/>
    <property type="project" value="UniProtKB-UniRule"/>
</dbReference>
<dbReference type="GO" id="GO:0034017">
    <property type="term" value="F:trans-2-decenoyl-acyl-carrier-protein isomerase activity"/>
    <property type="evidence" value="ECO:0007669"/>
    <property type="project" value="UniProtKB-UniRule"/>
</dbReference>
<dbReference type="GO" id="GO:0006636">
    <property type="term" value="P:unsaturated fatty acid biosynthetic process"/>
    <property type="evidence" value="ECO:0007669"/>
    <property type="project" value="UniProtKB-UniRule"/>
</dbReference>
<dbReference type="CDD" id="cd01287">
    <property type="entry name" value="FabA"/>
    <property type="match status" value="1"/>
</dbReference>
<dbReference type="FunFam" id="3.10.129.10:FF:000003">
    <property type="entry name" value="3-hydroxydecanoyl-[acyl-carrier-protein] dehydratase"/>
    <property type="match status" value="1"/>
</dbReference>
<dbReference type="Gene3D" id="3.10.129.10">
    <property type="entry name" value="Hotdog Thioesterase"/>
    <property type="match status" value="1"/>
</dbReference>
<dbReference type="HAMAP" id="MF_00405">
    <property type="entry name" value="FabA"/>
    <property type="match status" value="1"/>
</dbReference>
<dbReference type="InterPro" id="IPR010083">
    <property type="entry name" value="FabA"/>
</dbReference>
<dbReference type="InterPro" id="IPR013114">
    <property type="entry name" value="FabA_FabZ"/>
</dbReference>
<dbReference type="InterPro" id="IPR029069">
    <property type="entry name" value="HotDog_dom_sf"/>
</dbReference>
<dbReference type="NCBIfam" id="TIGR01749">
    <property type="entry name" value="fabA"/>
    <property type="match status" value="1"/>
</dbReference>
<dbReference type="NCBIfam" id="NF003509">
    <property type="entry name" value="PRK05174.1"/>
    <property type="match status" value="1"/>
</dbReference>
<dbReference type="PANTHER" id="PTHR30272">
    <property type="entry name" value="3-HYDROXYACYL-[ACYL-CARRIER-PROTEIN] DEHYDRATASE"/>
    <property type="match status" value="1"/>
</dbReference>
<dbReference type="PANTHER" id="PTHR30272:SF8">
    <property type="entry name" value="3-HYDROXYDECANOYL-[ACYL-CARRIER-PROTEIN] DEHYDRATASE"/>
    <property type="match status" value="1"/>
</dbReference>
<dbReference type="Pfam" id="PF07977">
    <property type="entry name" value="FabA"/>
    <property type="match status" value="1"/>
</dbReference>
<dbReference type="SUPFAM" id="SSF54637">
    <property type="entry name" value="Thioesterase/thiol ester dehydrase-isomerase"/>
    <property type="match status" value="1"/>
</dbReference>
<feature type="chain" id="PRO_1000201200" description="3-hydroxydecanoyl-[acyl-carrier-protein] dehydratase">
    <location>
        <begin position="1"/>
        <end position="172"/>
    </location>
</feature>
<feature type="active site" evidence="1">
    <location>
        <position position="71"/>
    </location>
</feature>
<organism>
    <name type="scientific">Salmonella enteritidis PT4 (strain P125109)</name>
    <dbReference type="NCBI Taxonomy" id="550537"/>
    <lineage>
        <taxon>Bacteria</taxon>
        <taxon>Pseudomonadati</taxon>
        <taxon>Pseudomonadota</taxon>
        <taxon>Gammaproteobacteria</taxon>
        <taxon>Enterobacterales</taxon>
        <taxon>Enterobacteriaceae</taxon>
        <taxon>Salmonella</taxon>
    </lineage>
</organism>
<name>FABA_SALEP</name>
<comment type="function">
    <text evidence="1">Necessary for the introduction of cis unsaturation into fatty acids. Catalyzes the dehydration of (3R)-3-hydroxydecanoyl-ACP to E-(2)-decenoyl-ACP and then its isomerization to Z-(3)-decenoyl-ACP. Can catalyze the dehydratase reaction for beta-hydroxyacyl-ACPs with saturated chain lengths up to 16:0, being most active on intermediate chain length.</text>
</comment>
<comment type="catalytic activity">
    <reaction evidence="1">
        <text>a (3R)-hydroxyacyl-[ACP] = a (2E)-enoyl-[ACP] + H2O</text>
        <dbReference type="Rhea" id="RHEA:13097"/>
        <dbReference type="Rhea" id="RHEA-COMP:9925"/>
        <dbReference type="Rhea" id="RHEA-COMP:9945"/>
        <dbReference type="ChEBI" id="CHEBI:15377"/>
        <dbReference type="ChEBI" id="CHEBI:78784"/>
        <dbReference type="ChEBI" id="CHEBI:78827"/>
        <dbReference type="EC" id="4.2.1.59"/>
    </reaction>
</comment>
<comment type="catalytic activity">
    <reaction evidence="1">
        <text>(3R)-hydroxydecanoyl-[ACP] = (2E)-decenoyl-[ACP] + H2O</text>
        <dbReference type="Rhea" id="RHEA:41860"/>
        <dbReference type="Rhea" id="RHEA-COMP:9638"/>
        <dbReference type="Rhea" id="RHEA-COMP:9639"/>
        <dbReference type="ChEBI" id="CHEBI:15377"/>
        <dbReference type="ChEBI" id="CHEBI:78466"/>
        <dbReference type="ChEBI" id="CHEBI:78467"/>
    </reaction>
</comment>
<comment type="catalytic activity">
    <reaction evidence="1">
        <text>(2E)-decenoyl-[ACP] = (3Z)-decenoyl-[ACP]</text>
        <dbReference type="Rhea" id="RHEA:23568"/>
        <dbReference type="Rhea" id="RHEA-COMP:9639"/>
        <dbReference type="Rhea" id="RHEA-COMP:9927"/>
        <dbReference type="ChEBI" id="CHEBI:78467"/>
        <dbReference type="ChEBI" id="CHEBI:78798"/>
        <dbReference type="EC" id="5.3.3.14"/>
    </reaction>
</comment>
<comment type="pathway">
    <text evidence="1">Lipid metabolism; fatty acid biosynthesis.</text>
</comment>
<comment type="subunit">
    <text evidence="1">Homodimer.</text>
</comment>
<comment type="subcellular location">
    <subcellularLocation>
        <location evidence="1">Cytoplasm</location>
    </subcellularLocation>
</comment>
<comment type="similarity">
    <text evidence="1">Belongs to the thioester dehydratase family. FabA subfamily.</text>
</comment>
<keyword id="KW-0963">Cytoplasm</keyword>
<keyword id="KW-0275">Fatty acid biosynthesis</keyword>
<keyword id="KW-0276">Fatty acid metabolism</keyword>
<keyword id="KW-0413">Isomerase</keyword>
<keyword id="KW-0444">Lipid biosynthesis</keyword>
<keyword id="KW-0443">Lipid metabolism</keyword>
<keyword id="KW-0456">Lyase</keyword>
<evidence type="ECO:0000255" key="1">
    <source>
        <dbReference type="HAMAP-Rule" id="MF_00405"/>
    </source>
</evidence>
<protein>
    <recommendedName>
        <fullName evidence="1">3-hydroxydecanoyl-[acyl-carrier-protein] dehydratase</fullName>
        <ecNumber evidence="1">4.2.1.59</ecNumber>
    </recommendedName>
    <alternativeName>
        <fullName evidence="1">3-hydroxyacyl-[acyl-carrier-protein] dehydratase FabA</fullName>
    </alternativeName>
    <alternativeName>
        <fullName evidence="1">Beta-hydroxydecanoyl thioester dehydrase</fullName>
    </alternativeName>
    <alternativeName>
        <fullName evidence="1">Trans-2-decenoyl-[acyl-carrier-protein] isomerase</fullName>
        <ecNumber evidence="1">5.3.3.14</ecNumber>
    </alternativeName>
</protein>
<accession>B5QZF7</accession>
<sequence>MVDKRESYTKEDLLASGRGELFGAKGPQLPAPNMLMMDRVVKMTETGGNFDKGYVEAELDINPDLWFFGCHFIGDPVMPGCLGLDAMWQLVGFYLGWLGGEGKGRALGVGEVKFTGQVLPTARKVTYRIHFKRIVNRRLIMGLADGEVLVDGRLIYTAHDLKVGLFQDTSAF</sequence>
<gene>
    <name evidence="1" type="primary">fabA</name>
    <name type="ordered locus">SEN0932</name>
</gene>
<reference key="1">
    <citation type="journal article" date="2008" name="Genome Res.">
        <title>Comparative genome analysis of Salmonella enteritidis PT4 and Salmonella gallinarum 287/91 provides insights into evolutionary and host adaptation pathways.</title>
        <authorList>
            <person name="Thomson N.R."/>
            <person name="Clayton D.J."/>
            <person name="Windhorst D."/>
            <person name="Vernikos G."/>
            <person name="Davidson S."/>
            <person name="Churcher C."/>
            <person name="Quail M.A."/>
            <person name="Stevens M."/>
            <person name="Jones M.A."/>
            <person name="Watson M."/>
            <person name="Barron A."/>
            <person name="Layton A."/>
            <person name="Pickard D."/>
            <person name="Kingsley R.A."/>
            <person name="Bignell A."/>
            <person name="Clark L."/>
            <person name="Harris B."/>
            <person name="Ormond D."/>
            <person name="Abdellah Z."/>
            <person name="Brooks K."/>
            <person name="Cherevach I."/>
            <person name="Chillingworth T."/>
            <person name="Woodward J."/>
            <person name="Norberczak H."/>
            <person name="Lord A."/>
            <person name="Arrowsmith C."/>
            <person name="Jagels K."/>
            <person name="Moule S."/>
            <person name="Mungall K."/>
            <person name="Saunders M."/>
            <person name="Whitehead S."/>
            <person name="Chabalgoity J.A."/>
            <person name="Maskell D."/>
            <person name="Humphreys T."/>
            <person name="Roberts M."/>
            <person name="Barrow P.A."/>
            <person name="Dougan G."/>
            <person name="Parkhill J."/>
        </authorList>
    </citation>
    <scope>NUCLEOTIDE SEQUENCE [LARGE SCALE GENOMIC DNA]</scope>
    <source>
        <strain>P125109</strain>
    </source>
</reference>
<proteinExistence type="inferred from homology"/>